<reference key="1">
    <citation type="journal article" date="2000" name="Nature">
        <title>Sequence and analysis of chromosome 5 of the plant Arabidopsis thaliana.</title>
        <authorList>
            <person name="Tabata S."/>
            <person name="Kaneko T."/>
            <person name="Nakamura Y."/>
            <person name="Kotani H."/>
            <person name="Kato T."/>
            <person name="Asamizu E."/>
            <person name="Miyajima N."/>
            <person name="Sasamoto S."/>
            <person name="Kimura T."/>
            <person name="Hosouchi T."/>
            <person name="Kawashima K."/>
            <person name="Kohara M."/>
            <person name="Matsumoto M."/>
            <person name="Matsuno A."/>
            <person name="Muraki A."/>
            <person name="Nakayama S."/>
            <person name="Nakazaki N."/>
            <person name="Naruo K."/>
            <person name="Okumura S."/>
            <person name="Shinpo S."/>
            <person name="Takeuchi C."/>
            <person name="Wada T."/>
            <person name="Watanabe A."/>
            <person name="Yamada M."/>
            <person name="Yasuda M."/>
            <person name="Sato S."/>
            <person name="de la Bastide M."/>
            <person name="Huang E."/>
            <person name="Spiegel L."/>
            <person name="Gnoj L."/>
            <person name="O'Shaughnessy A."/>
            <person name="Preston R."/>
            <person name="Habermann K."/>
            <person name="Murray J."/>
            <person name="Johnson D."/>
            <person name="Rohlfing T."/>
            <person name="Nelson J."/>
            <person name="Stoneking T."/>
            <person name="Pepin K."/>
            <person name="Spieth J."/>
            <person name="Sekhon M."/>
            <person name="Armstrong J."/>
            <person name="Becker M."/>
            <person name="Belter E."/>
            <person name="Cordum H."/>
            <person name="Cordes M."/>
            <person name="Courtney L."/>
            <person name="Courtney W."/>
            <person name="Dante M."/>
            <person name="Du H."/>
            <person name="Edwards J."/>
            <person name="Fryman J."/>
            <person name="Haakensen B."/>
            <person name="Lamar E."/>
            <person name="Latreille P."/>
            <person name="Leonard S."/>
            <person name="Meyer R."/>
            <person name="Mulvaney E."/>
            <person name="Ozersky P."/>
            <person name="Riley A."/>
            <person name="Strowmatt C."/>
            <person name="Wagner-McPherson C."/>
            <person name="Wollam A."/>
            <person name="Yoakum M."/>
            <person name="Bell M."/>
            <person name="Dedhia N."/>
            <person name="Parnell L."/>
            <person name="Shah R."/>
            <person name="Rodriguez M."/>
            <person name="Hoon See L."/>
            <person name="Vil D."/>
            <person name="Baker J."/>
            <person name="Kirchoff K."/>
            <person name="Toth K."/>
            <person name="King L."/>
            <person name="Bahret A."/>
            <person name="Miller B."/>
            <person name="Marra M.A."/>
            <person name="Martienssen R."/>
            <person name="McCombie W.R."/>
            <person name="Wilson R.K."/>
            <person name="Murphy G."/>
            <person name="Bancroft I."/>
            <person name="Volckaert G."/>
            <person name="Wambutt R."/>
            <person name="Duesterhoeft A."/>
            <person name="Stiekema W."/>
            <person name="Pohl T."/>
            <person name="Entian K.-D."/>
            <person name="Terryn N."/>
            <person name="Hartley N."/>
            <person name="Bent E."/>
            <person name="Johnson S."/>
            <person name="Langham S.-A."/>
            <person name="McCullagh B."/>
            <person name="Robben J."/>
            <person name="Grymonprez B."/>
            <person name="Zimmermann W."/>
            <person name="Ramsperger U."/>
            <person name="Wedler H."/>
            <person name="Balke K."/>
            <person name="Wedler E."/>
            <person name="Peters S."/>
            <person name="van Staveren M."/>
            <person name="Dirkse W."/>
            <person name="Mooijman P."/>
            <person name="Klein Lankhorst R."/>
            <person name="Weitzenegger T."/>
            <person name="Bothe G."/>
            <person name="Rose M."/>
            <person name="Hauf J."/>
            <person name="Berneiser S."/>
            <person name="Hempel S."/>
            <person name="Feldpausch M."/>
            <person name="Lamberth S."/>
            <person name="Villarroel R."/>
            <person name="Gielen J."/>
            <person name="Ardiles W."/>
            <person name="Bents O."/>
            <person name="Lemcke K."/>
            <person name="Kolesov G."/>
            <person name="Mayer K.F.X."/>
            <person name="Rudd S."/>
            <person name="Schoof H."/>
            <person name="Schueller C."/>
            <person name="Zaccaria P."/>
            <person name="Mewes H.-W."/>
            <person name="Bevan M."/>
            <person name="Fransz P.F."/>
        </authorList>
    </citation>
    <scope>NUCLEOTIDE SEQUENCE [LARGE SCALE GENOMIC DNA]</scope>
    <source>
        <strain>cv. Columbia</strain>
    </source>
</reference>
<reference key="2">
    <citation type="journal article" date="2017" name="Plant J.">
        <title>Araport11: a complete reannotation of the Arabidopsis thaliana reference genome.</title>
        <authorList>
            <person name="Cheng C.Y."/>
            <person name="Krishnakumar V."/>
            <person name="Chan A.P."/>
            <person name="Thibaud-Nissen F."/>
            <person name="Schobel S."/>
            <person name="Town C.D."/>
        </authorList>
    </citation>
    <scope>GENOME REANNOTATION</scope>
    <source>
        <strain>cv. Columbia</strain>
    </source>
</reference>
<reference key="3">
    <citation type="journal article" date="2003" name="Science">
        <title>Empirical analysis of transcriptional activity in the Arabidopsis genome.</title>
        <authorList>
            <person name="Yamada K."/>
            <person name="Lim J."/>
            <person name="Dale J.M."/>
            <person name="Chen H."/>
            <person name="Shinn P."/>
            <person name="Palm C.J."/>
            <person name="Southwick A.M."/>
            <person name="Wu H.C."/>
            <person name="Kim C.J."/>
            <person name="Nguyen M."/>
            <person name="Pham P.K."/>
            <person name="Cheuk R.F."/>
            <person name="Karlin-Newmann G."/>
            <person name="Liu S.X."/>
            <person name="Lam B."/>
            <person name="Sakano H."/>
            <person name="Wu T."/>
            <person name="Yu G."/>
            <person name="Miranda M."/>
            <person name="Quach H.L."/>
            <person name="Tripp M."/>
            <person name="Chang C.H."/>
            <person name="Lee J.M."/>
            <person name="Toriumi M.J."/>
            <person name="Chan M.M."/>
            <person name="Tang C.C."/>
            <person name="Onodera C.S."/>
            <person name="Deng J.M."/>
            <person name="Akiyama K."/>
            <person name="Ansari Y."/>
            <person name="Arakawa T."/>
            <person name="Banh J."/>
            <person name="Banno F."/>
            <person name="Bowser L."/>
            <person name="Brooks S.Y."/>
            <person name="Carninci P."/>
            <person name="Chao Q."/>
            <person name="Choy N."/>
            <person name="Enju A."/>
            <person name="Goldsmith A.D."/>
            <person name="Gurjal M."/>
            <person name="Hansen N.F."/>
            <person name="Hayashizaki Y."/>
            <person name="Johnson-Hopson C."/>
            <person name="Hsuan V.W."/>
            <person name="Iida K."/>
            <person name="Karnes M."/>
            <person name="Khan S."/>
            <person name="Koesema E."/>
            <person name="Ishida J."/>
            <person name="Jiang P.X."/>
            <person name="Jones T."/>
            <person name="Kawai J."/>
            <person name="Kamiya A."/>
            <person name="Meyers C."/>
            <person name="Nakajima M."/>
            <person name="Narusaka M."/>
            <person name="Seki M."/>
            <person name="Sakurai T."/>
            <person name="Satou M."/>
            <person name="Tamse R."/>
            <person name="Vaysberg M."/>
            <person name="Wallender E.K."/>
            <person name="Wong C."/>
            <person name="Yamamura Y."/>
            <person name="Yuan S."/>
            <person name="Shinozaki K."/>
            <person name="Davis R.W."/>
            <person name="Theologis A."/>
            <person name="Ecker J.R."/>
        </authorList>
    </citation>
    <scope>NUCLEOTIDE SEQUENCE [LARGE SCALE MRNA]</scope>
    <source>
        <strain>cv. Columbia</strain>
    </source>
</reference>
<reference key="4">
    <citation type="journal article" date="2013" name="Science">
        <title>Uncovering the protein translocon at the chloroplast inner envelope membrane.</title>
        <authorList>
            <person name="Kikuchi S."/>
            <person name="Bedard J."/>
            <person name="Hirano M."/>
            <person name="Hirabayashi Y."/>
            <person name="Oishi M."/>
            <person name="Imai M."/>
            <person name="Takase M."/>
            <person name="Ide T."/>
            <person name="Nakai M."/>
        </authorList>
    </citation>
    <scope>FUNCTION</scope>
    <scope>COMPONENT OF THE 1-MD COMPLEX</scope>
    <scope>SUBUNIT</scope>
    <scope>IDENTIFICATION BY MASS SPECTROMETRY</scope>
    <scope>DEAMIDATION AT ASN-350</scope>
    <scope>SUBCELLULAR LOCATION</scope>
    <scope>DISRUPTION PHENOTYPE</scope>
</reference>
<keyword id="KW-0002">3D-structure</keyword>
<keyword id="KW-0150">Chloroplast</keyword>
<keyword id="KW-0472">Membrane</keyword>
<keyword id="KW-0934">Plastid</keyword>
<keyword id="KW-1001">Plastid inner membrane</keyword>
<keyword id="KW-0653">Protein transport</keyword>
<keyword id="KW-1185">Reference proteome</keyword>
<keyword id="KW-0809">Transit peptide</keyword>
<keyword id="KW-0813">Transport</keyword>
<evidence type="ECO:0000250" key="1">
    <source>
        <dbReference type="UniProtKB" id="Q8GZ79"/>
    </source>
</evidence>
<evidence type="ECO:0000255" key="2"/>
<evidence type="ECO:0000256" key="3">
    <source>
        <dbReference type="SAM" id="MobiDB-lite"/>
    </source>
</evidence>
<evidence type="ECO:0000269" key="4">
    <source>
    </source>
</evidence>
<evidence type="ECO:0000303" key="5">
    <source>
    </source>
</evidence>
<evidence type="ECO:0000305" key="6"/>
<evidence type="ECO:0000312" key="7">
    <source>
        <dbReference type="Araport" id="AT5G01590"/>
    </source>
</evidence>
<evidence type="ECO:0000312" key="8">
    <source>
        <dbReference type="EMBL" id="AAP41935.1"/>
    </source>
</evidence>
<evidence type="ECO:0000312" key="9">
    <source>
        <dbReference type="EMBL" id="CAB82275.1"/>
    </source>
</evidence>
<evidence type="ECO:0007829" key="10">
    <source>
        <dbReference type="PDB" id="8Z9Y"/>
    </source>
</evidence>
<gene>
    <name evidence="5" type="primary">TIC56</name>
    <name evidence="7" type="ordered locus">At5g01590</name>
    <name evidence="9" type="ORF">F7A7_110</name>
</gene>
<comment type="function">
    <text evidence="4">Involved in protein precursor import into chloroplasts. May be part of an intermediate translocation complex acting as a protein-conducting channel at the inner envelope.</text>
</comment>
<comment type="subunit">
    <text evidence="1 4">Part of the Tic complex. Component of the 1-MD complex, composed of TIC20-I, TIC214, TIC100 and TIC56. Interacts with the translocating preproteins. Hydrolysis of ATP is essential for the formation of this complex (PubMed:23372012). The 1-MD complex interacts with TIC21 (By similarity).</text>
</comment>
<comment type="subcellular location">
    <subcellularLocation>
        <location evidence="4">Plastid</location>
        <location evidence="4">Chloroplast inner membrane</location>
    </subcellularLocation>
</comment>
<comment type="disruption phenotype">
    <text evidence="4">Severe defects during embryogenesis, producing abnormal embryos and thereby leading to a lethality of young seedlings.</text>
</comment>
<comment type="sequence caution" evidence="6">
    <conflict type="erroneous gene model prediction">
        <sequence resource="EMBL-CDS" id="CAB82275"/>
    </conflict>
</comment>
<organism evidence="8">
    <name type="scientific">Arabidopsis thaliana</name>
    <name type="common">Mouse-ear cress</name>
    <dbReference type="NCBI Taxonomy" id="3702"/>
    <lineage>
        <taxon>Eukaryota</taxon>
        <taxon>Viridiplantae</taxon>
        <taxon>Streptophyta</taxon>
        <taxon>Embryophyta</taxon>
        <taxon>Tracheophyta</taxon>
        <taxon>Spermatophyta</taxon>
        <taxon>Magnoliopsida</taxon>
        <taxon>eudicotyledons</taxon>
        <taxon>Gunneridae</taxon>
        <taxon>Pentapetalae</taxon>
        <taxon>rosids</taxon>
        <taxon>malvids</taxon>
        <taxon>Brassicales</taxon>
        <taxon>Brassicaceae</taxon>
        <taxon>Camelineae</taxon>
        <taxon>Arabidopsis</taxon>
    </lineage>
</organism>
<proteinExistence type="evidence at protein level"/>
<protein>
    <recommendedName>
        <fullName evidence="5">Protein TIC 56, chloroplastic</fullName>
    </recommendedName>
    <alternativeName>
        <fullName evidence="5">Translocon at the inner envelope membrane of chloroplasts 56</fullName>
        <shortName evidence="5">AtTIC56</shortName>
    </alternativeName>
</protein>
<accession>Q7Y1W1</accession>
<accession>Q7Y1Z4</accession>
<accession>Q9M016</accession>
<dbReference type="EMBL" id="AL161946">
    <property type="protein sequence ID" value="CAB82275.1"/>
    <property type="status" value="ALT_SEQ"/>
    <property type="molecule type" value="Genomic_DNA"/>
</dbReference>
<dbReference type="EMBL" id="CP002688">
    <property type="protein sequence ID" value="AED90363.1"/>
    <property type="molecule type" value="Genomic_DNA"/>
</dbReference>
<dbReference type="EMBL" id="AY050767">
    <property type="protein sequence ID" value="AAP41935.1"/>
    <property type="molecule type" value="mRNA"/>
</dbReference>
<dbReference type="EMBL" id="BT008696">
    <property type="protein sequence ID" value="AAP40502.1"/>
    <property type="molecule type" value="mRNA"/>
</dbReference>
<dbReference type="PIR" id="T48180">
    <property type="entry name" value="T48180"/>
</dbReference>
<dbReference type="RefSeq" id="NP_568092.4">
    <property type="nucleotide sequence ID" value="NM_120237.6"/>
</dbReference>
<dbReference type="PDB" id="8Z9Y">
    <property type="method" value="EM"/>
    <property type="resolution" value="2.50 A"/>
    <property type="chains" value="E=1-527"/>
</dbReference>
<dbReference type="PDBsum" id="8Z9Y"/>
<dbReference type="EMDB" id="EMD-39872"/>
<dbReference type="SMR" id="Q7Y1W1"/>
<dbReference type="FunCoup" id="Q7Y1W1">
    <property type="interactions" value="1220"/>
</dbReference>
<dbReference type="STRING" id="3702.Q7Y1W1"/>
<dbReference type="TCDB" id="3.A.9.1.2">
    <property type="family name" value="the chloroplast envelope protein translocase (cept or tic-toc) family"/>
</dbReference>
<dbReference type="iPTMnet" id="Q7Y1W1"/>
<dbReference type="PaxDb" id="3702-AT5G01590.1"/>
<dbReference type="ProteomicsDB" id="234352"/>
<dbReference type="EnsemblPlants" id="AT5G01590.1">
    <property type="protein sequence ID" value="AT5G01590.1"/>
    <property type="gene ID" value="AT5G01590"/>
</dbReference>
<dbReference type="GeneID" id="830369"/>
<dbReference type="Gramene" id="AT5G01590.1">
    <property type="protein sequence ID" value="AT5G01590.1"/>
    <property type="gene ID" value="AT5G01590"/>
</dbReference>
<dbReference type="KEGG" id="ath:AT5G01590"/>
<dbReference type="Araport" id="AT5G01590"/>
<dbReference type="TAIR" id="AT5G01590">
    <property type="gene designation" value="TIC56"/>
</dbReference>
<dbReference type="eggNOG" id="ENOG502QR08">
    <property type="taxonomic scope" value="Eukaryota"/>
</dbReference>
<dbReference type="HOGENOM" id="CLU_038987_0_0_1"/>
<dbReference type="InParanoid" id="Q7Y1W1"/>
<dbReference type="OMA" id="FWDFAKQ"/>
<dbReference type="PhylomeDB" id="Q7Y1W1"/>
<dbReference type="PRO" id="PR:Q7Y1W1"/>
<dbReference type="Proteomes" id="UP000006548">
    <property type="component" value="Chromosome 5"/>
</dbReference>
<dbReference type="ExpressionAtlas" id="Q7Y1W1">
    <property type="expression patterns" value="baseline and differential"/>
</dbReference>
<dbReference type="GO" id="GO:0009507">
    <property type="term" value="C:chloroplast"/>
    <property type="evidence" value="ECO:0007005"/>
    <property type="project" value="TAIR"/>
</dbReference>
<dbReference type="GO" id="GO:0009941">
    <property type="term" value="C:chloroplast envelope"/>
    <property type="evidence" value="ECO:0007005"/>
    <property type="project" value="TAIR"/>
</dbReference>
<dbReference type="GO" id="GO:0009706">
    <property type="term" value="C:chloroplast inner membrane"/>
    <property type="evidence" value="ECO:0000314"/>
    <property type="project" value="TAIR"/>
</dbReference>
<dbReference type="GO" id="GO:0005886">
    <property type="term" value="C:plasma membrane"/>
    <property type="evidence" value="ECO:0007005"/>
    <property type="project" value="TAIR"/>
</dbReference>
<dbReference type="GO" id="GO:0009536">
    <property type="term" value="C:plastid"/>
    <property type="evidence" value="ECO:0007005"/>
    <property type="project" value="TAIR"/>
</dbReference>
<dbReference type="GO" id="GO:0008320">
    <property type="term" value="F:protein transmembrane transporter activity"/>
    <property type="evidence" value="ECO:0000314"/>
    <property type="project" value="TAIR"/>
</dbReference>
<dbReference type="GO" id="GO:0045037">
    <property type="term" value="P:protein import into chloroplast stroma"/>
    <property type="evidence" value="ECO:0000314"/>
    <property type="project" value="TAIR"/>
</dbReference>
<dbReference type="InterPro" id="IPR025640">
    <property type="entry name" value="GYF_2"/>
</dbReference>
<dbReference type="InterPro" id="IPR037471">
    <property type="entry name" value="TIC56"/>
</dbReference>
<dbReference type="PANTHER" id="PTHR37755">
    <property type="entry name" value="PROTEIN TIC 56, CHLOROPLASTIC"/>
    <property type="match status" value="1"/>
</dbReference>
<dbReference type="PANTHER" id="PTHR37755:SF1">
    <property type="entry name" value="PROTEIN TIC 56, CHLOROPLASTIC"/>
    <property type="match status" value="1"/>
</dbReference>
<dbReference type="Pfam" id="PF14237">
    <property type="entry name" value="GYF_2"/>
    <property type="match status" value="1"/>
</dbReference>
<name>TIC56_ARATH</name>
<sequence>MSSMNFNPFQNWFEKPPNPVPSINFVSLADSFFPKSQSPNFASIGLPKFSKKSPKPETAGTDEPGPYKQIAEQFLWECENIPDYRHTPEVDKLLNEDPVFEKKENPSTEEIEAEQKWWESFRASPVVQFMTRAEEIADDMNKMELEDNDTPYRKEDKDYWRAIPHVPGFDGRPMPRKAIKSKEESDDKFWDFMKQFLFGLWGFRQRPYPPGRPIDVAQAIGYKRLEKRYYDFIMKTGGWWYKDRLGRSRGPCEIITLKTAYGAGIIDRDTFIWGEDMDEWAPIHMVYGLEPAIATWEVRLGAAATAFLHKLQKGIPPWVPLKGREPKTYKQLQKEAIESKKRDMAVLEANGGVWPGVRTPSHALFLWASGSELTTVLESDHMPNKFIPKQLRLELAKVIPGLRPWEVISIEQAMDQISYGGEWYREPLGTYTTGPPYIREWNRSVMRLFRIFYNLSVRVGQKLERTVPGFDTIMDKVQKDYDKRIARRMKRREEELREEDLKHYSGRTDEDEEEEEEEDDDSNSKKD</sequence>
<feature type="transit peptide" description="Chloroplast" evidence="2">
    <location>
        <begin position="1"/>
        <end position="48"/>
    </location>
</feature>
<feature type="chain" id="PRO_0000431666" description="Protein TIC 56, chloroplastic">
    <location>
        <begin position="49"/>
        <end position="527"/>
    </location>
</feature>
<feature type="region of interest" description="Disordered" evidence="3">
    <location>
        <begin position="43"/>
        <end position="67"/>
    </location>
</feature>
<feature type="region of interest" description="Disordered" evidence="3">
    <location>
        <begin position="491"/>
        <end position="527"/>
    </location>
</feature>
<feature type="compositionally biased region" description="Basic and acidic residues" evidence="3">
    <location>
        <begin position="491"/>
        <end position="508"/>
    </location>
</feature>
<feature type="compositionally biased region" description="Acidic residues" evidence="3">
    <location>
        <begin position="509"/>
        <end position="521"/>
    </location>
</feature>
<feature type="modified residue" description="Deamidated asparagine" evidence="4">
    <location>
        <position position="350"/>
    </location>
</feature>
<feature type="sequence conflict" description="In Ref. 3; AAP40502." evidence="6" ref="3">
    <original>T</original>
    <variation>K</variation>
    <location>
        <position position="259"/>
    </location>
</feature>
<feature type="sequence conflict" description="In Ref. 3; AAP40502." evidence="6" ref="3">
    <original>M</original>
    <variation>V</variation>
    <location>
        <position position="414"/>
    </location>
</feature>
<feature type="helix" evidence="10">
    <location>
        <begin position="66"/>
        <end position="80"/>
    </location>
</feature>
<feature type="helix" evidence="10">
    <location>
        <begin position="88"/>
        <end position="94"/>
    </location>
</feature>
<feature type="helix" evidence="10">
    <location>
        <begin position="107"/>
        <end position="121"/>
    </location>
</feature>
<feature type="helix" evidence="10">
    <location>
        <begin position="125"/>
        <end position="146"/>
    </location>
</feature>
<feature type="helix" evidence="10">
    <location>
        <begin position="154"/>
        <end position="156"/>
    </location>
</feature>
<feature type="helix" evidence="10">
    <location>
        <begin position="157"/>
        <end position="162"/>
    </location>
</feature>
<feature type="strand" evidence="10">
    <location>
        <begin position="171"/>
        <end position="173"/>
    </location>
</feature>
<feature type="helix" evidence="10">
    <location>
        <begin position="182"/>
        <end position="200"/>
    </location>
</feature>
<feature type="helix" evidence="10">
    <location>
        <begin position="216"/>
        <end position="220"/>
    </location>
</feature>
<feature type="helix" evidence="10">
    <location>
        <begin position="222"/>
        <end position="234"/>
    </location>
</feature>
<feature type="strand" evidence="10">
    <location>
        <begin position="239"/>
        <end position="242"/>
    </location>
</feature>
<feature type="strand" evidence="10">
    <location>
        <begin position="248"/>
        <end position="252"/>
    </location>
</feature>
<feature type="helix" evidence="10">
    <location>
        <begin position="254"/>
        <end position="262"/>
    </location>
</feature>
<feature type="strand" evidence="10">
    <location>
        <begin position="271"/>
        <end position="273"/>
    </location>
</feature>
<feature type="turn" evidence="10">
    <location>
        <begin position="283"/>
        <end position="285"/>
    </location>
</feature>
<feature type="helix" evidence="10">
    <location>
        <begin position="289"/>
        <end position="293"/>
    </location>
</feature>
<feature type="helix" evidence="10">
    <location>
        <begin position="296"/>
        <end position="313"/>
    </location>
</feature>
<feature type="helix" evidence="10">
    <location>
        <begin position="329"/>
        <end position="349"/>
    </location>
</feature>
<feature type="strand" evidence="10">
    <location>
        <begin position="351"/>
        <end position="353"/>
    </location>
</feature>
<feature type="helix" evidence="10">
    <location>
        <begin position="361"/>
        <end position="364"/>
    </location>
</feature>
<feature type="turn" evidence="10">
    <location>
        <begin position="365"/>
        <end position="369"/>
    </location>
</feature>
<feature type="helix" evidence="10">
    <location>
        <begin position="370"/>
        <end position="372"/>
    </location>
</feature>
<feature type="helix" evidence="10">
    <location>
        <begin position="373"/>
        <end position="377"/>
    </location>
</feature>
<feature type="strand" evidence="10">
    <location>
        <begin position="385"/>
        <end position="387"/>
    </location>
</feature>
<feature type="helix" evidence="10">
    <location>
        <begin position="389"/>
        <end position="398"/>
    </location>
</feature>
<feature type="helix" evidence="10">
    <location>
        <begin position="404"/>
        <end position="417"/>
    </location>
</feature>
<feature type="strand" evidence="10">
    <location>
        <begin position="418"/>
        <end position="421"/>
    </location>
</feature>
<feature type="turn" evidence="10">
    <location>
        <begin position="428"/>
        <end position="431"/>
    </location>
</feature>
<feature type="helix" evidence="10">
    <location>
        <begin position="436"/>
        <end position="454"/>
    </location>
</feature>